<organism>
    <name type="scientific">Thermosipho africanus (strain TCF52B)</name>
    <dbReference type="NCBI Taxonomy" id="484019"/>
    <lineage>
        <taxon>Bacteria</taxon>
        <taxon>Thermotogati</taxon>
        <taxon>Thermotogota</taxon>
        <taxon>Thermotogae</taxon>
        <taxon>Thermotogales</taxon>
        <taxon>Fervidobacteriaceae</taxon>
        <taxon>Thermosipho</taxon>
    </lineage>
</organism>
<keyword id="KW-0963">Cytoplasm</keyword>
<keyword id="KW-0460">Magnesium</keyword>
<keyword id="KW-0479">Metal-binding</keyword>
<keyword id="KW-0566">Pantothenate biosynthesis</keyword>
<keyword id="KW-1185">Reference proteome</keyword>
<keyword id="KW-0808">Transferase</keyword>
<evidence type="ECO:0000255" key="1">
    <source>
        <dbReference type="HAMAP-Rule" id="MF_00156"/>
    </source>
</evidence>
<accession>B7IDK8</accession>
<gene>
    <name evidence="1" type="primary">panB</name>
    <name type="ordered locus">THA_1647</name>
</gene>
<reference key="1">
    <citation type="journal article" date="2009" name="J. Bacteriol.">
        <title>The genome of Thermosipho africanus TCF52B: lateral genetic connections to the Firmicutes and Archaea.</title>
        <authorList>
            <person name="Nesboe C.L."/>
            <person name="Bapteste E."/>
            <person name="Curtis B."/>
            <person name="Dahle H."/>
            <person name="Lopez P."/>
            <person name="Macleod D."/>
            <person name="Dlutek M."/>
            <person name="Bowman S."/>
            <person name="Zhaxybayeva O."/>
            <person name="Birkeland N.-K."/>
            <person name="Doolittle W.F."/>
        </authorList>
    </citation>
    <scope>NUCLEOTIDE SEQUENCE [LARGE SCALE GENOMIC DNA]</scope>
    <source>
        <strain>TCF52B</strain>
    </source>
</reference>
<dbReference type="EC" id="2.1.2.11" evidence="1"/>
<dbReference type="EMBL" id="CP001185">
    <property type="protein sequence ID" value="ACJ76085.1"/>
    <property type="molecule type" value="Genomic_DNA"/>
</dbReference>
<dbReference type="RefSeq" id="WP_012580325.1">
    <property type="nucleotide sequence ID" value="NC_011653.1"/>
</dbReference>
<dbReference type="SMR" id="B7IDK8"/>
<dbReference type="STRING" id="484019.THA_1647"/>
<dbReference type="KEGG" id="taf:THA_1647"/>
<dbReference type="eggNOG" id="COG0413">
    <property type="taxonomic scope" value="Bacteria"/>
</dbReference>
<dbReference type="HOGENOM" id="CLU_036645_1_0_0"/>
<dbReference type="OrthoDB" id="9781789at2"/>
<dbReference type="UniPathway" id="UPA00028">
    <property type="reaction ID" value="UER00003"/>
</dbReference>
<dbReference type="Proteomes" id="UP000002453">
    <property type="component" value="Chromosome"/>
</dbReference>
<dbReference type="GO" id="GO:0005737">
    <property type="term" value="C:cytoplasm"/>
    <property type="evidence" value="ECO:0007669"/>
    <property type="project" value="UniProtKB-SubCell"/>
</dbReference>
<dbReference type="GO" id="GO:0003864">
    <property type="term" value="F:3-methyl-2-oxobutanoate hydroxymethyltransferase activity"/>
    <property type="evidence" value="ECO:0007669"/>
    <property type="project" value="UniProtKB-UniRule"/>
</dbReference>
<dbReference type="GO" id="GO:0000287">
    <property type="term" value="F:magnesium ion binding"/>
    <property type="evidence" value="ECO:0007669"/>
    <property type="project" value="TreeGrafter"/>
</dbReference>
<dbReference type="GO" id="GO:0015940">
    <property type="term" value="P:pantothenate biosynthetic process"/>
    <property type="evidence" value="ECO:0007669"/>
    <property type="project" value="UniProtKB-UniRule"/>
</dbReference>
<dbReference type="CDD" id="cd06557">
    <property type="entry name" value="KPHMT-like"/>
    <property type="match status" value="1"/>
</dbReference>
<dbReference type="FunFam" id="3.20.20.60:FF:000003">
    <property type="entry name" value="3-methyl-2-oxobutanoate hydroxymethyltransferase"/>
    <property type="match status" value="1"/>
</dbReference>
<dbReference type="Gene3D" id="3.20.20.60">
    <property type="entry name" value="Phosphoenolpyruvate-binding domains"/>
    <property type="match status" value="1"/>
</dbReference>
<dbReference type="HAMAP" id="MF_00156">
    <property type="entry name" value="PanB"/>
    <property type="match status" value="1"/>
</dbReference>
<dbReference type="InterPro" id="IPR003700">
    <property type="entry name" value="Pantoate_hydroxy_MeTrfase"/>
</dbReference>
<dbReference type="InterPro" id="IPR015813">
    <property type="entry name" value="Pyrv/PenolPyrv_kinase-like_dom"/>
</dbReference>
<dbReference type="InterPro" id="IPR040442">
    <property type="entry name" value="Pyrv_kinase-like_dom_sf"/>
</dbReference>
<dbReference type="NCBIfam" id="TIGR00222">
    <property type="entry name" value="panB"/>
    <property type="match status" value="1"/>
</dbReference>
<dbReference type="NCBIfam" id="NF001452">
    <property type="entry name" value="PRK00311.1"/>
    <property type="match status" value="1"/>
</dbReference>
<dbReference type="PANTHER" id="PTHR20881">
    <property type="entry name" value="3-METHYL-2-OXOBUTANOATE HYDROXYMETHYLTRANSFERASE"/>
    <property type="match status" value="1"/>
</dbReference>
<dbReference type="PANTHER" id="PTHR20881:SF0">
    <property type="entry name" value="3-METHYL-2-OXOBUTANOATE HYDROXYMETHYLTRANSFERASE"/>
    <property type="match status" value="1"/>
</dbReference>
<dbReference type="Pfam" id="PF02548">
    <property type="entry name" value="Pantoate_transf"/>
    <property type="match status" value="1"/>
</dbReference>
<dbReference type="PIRSF" id="PIRSF000388">
    <property type="entry name" value="Pantoate_hydroxy_MeTrfase"/>
    <property type="match status" value="1"/>
</dbReference>
<dbReference type="SUPFAM" id="SSF51621">
    <property type="entry name" value="Phosphoenolpyruvate/pyruvate domain"/>
    <property type="match status" value="1"/>
</dbReference>
<feature type="chain" id="PRO_1000118131" description="3-methyl-2-oxobutanoate hydroxymethyltransferase">
    <location>
        <begin position="1"/>
        <end position="265"/>
    </location>
</feature>
<feature type="active site" description="Proton acceptor" evidence="1">
    <location>
        <position position="178"/>
    </location>
</feature>
<feature type="binding site" evidence="1">
    <location>
        <begin position="41"/>
        <end position="42"/>
    </location>
    <ligand>
        <name>3-methyl-2-oxobutanoate</name>
        <dbReference type="ChEBI" id="CHEBI:11851"/>
    </ligand>
</feature>
<feature type="binding site" evidence="1">
    <location>
        <position position="41"/>
    </location>
    <ligand>
        <name>Mg(2+)</name>
        <dbReference type="ChEBI" id="CHEBI:18420"/>
    </ligand>
</feature>
<feature type="binding site" evidence="1">
    <location>
        <position position="80"/>
    </location>
    <ligand>
        <name>3-methyl-2-oxobutanoate</name>
        <dbReference type="ChEBI" id="CHEBI:11851"/>
    </ligand>
</feature>
<feature type="binding site" evidence="1">
    <location>
        <position position="80"/>
    </location>
    <ligand>
        <name>Mg(2+)</name>
        <dbReference type="ChEBI" id="CHEBI:18420"/>
    </ligand>
</feature>
<feature type="binding site" evidence="1">
    <location>
        <position position="109"/>
    </location>
    <ligand>
        <name>3-methyl-2-oxobutanoate</name>
        <dbReference type="ChEBI" id="CHEBI:11851"/>
    </ligand>
</feature>
<feature type="binding site" evidence="1">
    <location>
        <position position="111"/>
    </location>
    <ligand>
        <name>Mg(2+)</name>
        <dbReference type="ChEBI" id="CHEBI:18420"/>
    </ligand>
</feature>
<sequence length="265" mass="28982">MTIQKILKMKNKEKIVMVTAYDAPTAKILEKAGVDIILVGDSLGNNVLGYDSTIPVTLEEMIIHLQAVRRGAPNSFIVADLPFLSYGYSIEESVKNAGLLIKNGANAVKIEGGAQNCEIIQKCLNIGIPVMGHIGFTPQSLNMFGGYKVQGKEESAKKKLLDNALALENCGVFSIVLEMVTESIAKEITEKLSIPTIGIGAGRYCDGQVLVFHDIVGLNPEFKPKFSKMYANTFEIMLNAIEKFKMEVKDKTFPSKENVFEEGGK</sequence>
<name>PANB_THEAB</name>
<comment type="function">
    <text evidence="1">Catalyzes the reversible reaction in which hydroxymethyl group from 5,10-methylenetetrahydrofolate is transferred onto alpha-ketoisovalerate to form ketopantoate.</text>
</comment>
<comment type="catalytic activity">
    <reaction evidence="1">
        <text>3-methyl-2-oxobutanoate + (6R)-5,10-methylene-5,6,7,8-tetrahydrofolate + H2O = 2-dehydropantoate + (6S)-5,6,7,8-tetrahydrofolate</text>
        <dbReference type="Rhea" id="RHEA:11824"/>
        <dbReference type="ChEBI" id="CHEBI:11561"/>
        <dbReference type="ChEBI" id="CHEBI:11851"/>
        <dbReference type="ChEBI" id="CHEBI:15377"/>
        <dbReference type="ChEBI" id="CHEBI:15636"/>
        <dbReference type="ChEBI" id="CHEBI:57453"/>
        <dbReference type="EC" id="2.1.2.11"/>
    </reaction>
</comment>
<comment type="cofactor">
    <cofactor evidence="1">
        <name>Mg(2+)</name>
        <dbReference type="ChEBI" id="CHEBI:18420"/>
    </cofactor>
    <text evidence="1">Binds 1 Mg(2+) ion per subunit.</text>
</comment>
<comment type="pathway">
    <text evidence="1">Cofactor biosynthesis; (R)-pantothenate biosynthesis; (R)-pantoate from 3-methyl-2-oxobutanoate: step 1/2.</text>
</comment>
<comment type="subunit">
    <text evidence="1">Homodecamer; pentamer of dimers.</text>
</comment>
<comment type="subcellular location">
    <subcellularLocation>
        <location evidence="1">Cytoplasm</location>
    </subcellularLocation>
</comment>
<comment type="similarity">
    <text evidence="1">Belongs to the PanB family.</text>
</comment>
<proteinExistence type="inferred from homology"/>
<protein>
    <recommendedName>
        <fullName evidence="1">3-methyl-2-oxobutanoate hydroxymethyltransferase</fullName>
        <ecNumber evidence="1">2.1.2.11</ecNumber>
    </recommendedName>
    <alternativeName>
        <fullName evidence="1">Ketopantoate hydroxymethyltransferase</fullName>
        <shortName evidence="1">KPHMT</shortName>
    </alternativeName>
</protein>